<organism>
    <name type="scientific">Xenopus tropicalis</name>
    <name type="common">Western clawed frog</name>
    <name type="synonym">Silurana tropicalis</name>
    <dbReference type="NCBI Taxonomy" id="8364"/>
    <lineage>
        <taxon>Eukaryota</taxon>
        <taxon>Metazoa</taxon>
        <taxon>Chordata</taxon>
        <taxon>Craniata</taxon>
        <taxon>Vertebrata</taxon>
        <taxon>Euteleostomi</taxon>
        <taxon>Amphibia</taxon>
        <taxon>Batrachia</taxon>
        <taxon>Anura</taxon>
        <taxon>Pipoidea</taxon>
        <taxon>Pipidae</taxon>
        <taxon>Xenopodinae</taxon>
        <taxon>Xenopus</taxon>
        <taxon>Silurana</taxon>
    </lineage>
</organism>
<name>OTX2_XENTR</name>
<gene>
    <name type="primary">otx2</name>
    <name type="ORF">TGas114a06.1</name>
</gene>
<accession>Q28FN6</accession>
<accession>A4II69</accession>
<reference key="1">
    <citation type="submission" date="2006-06" db="EMBL/GenBank/DDBJ databases">
        <authorList>
            <consortium name="Sanger Xenopus tropicalis EST/cDNA project"/>
        </authorList>
    </citation>
    <scope>NUCLEOTIDE SEQUENCE [LARGE SCALE MRNA]</scope>
    <source>
        <tissue>Gastrula</tissue>
    </source>
</reference>
<reference key="2">
    <citation type="submission" date="2007-03" db="EMBL/GenBank/DDBJ databases">
        <authorList>
            <consortium name="NIH - Xenopus Gene Collection (XGC) project"/>
        </authorList>
    </citation>
    <scope>NUCLEOTIDE SEQUENCE [LARGE SCALE MRNA]</scope>
    <source>
        <tissue>Embryo</tissue>
    </source>
</reference>
<sequence>MMSYLKQPPYAVNGLSLTTSGMDLLHPSVGYPATPRKQRRERTTFTRAQLDVLEALFAKTRYPDIFMREEVALKINLPESRVQVWFKNRRAKCRQQQQQQQNGGQNKVRPSKKKPSPAREVSSESGTSGQFSPPCSTSVPVISSSTAPVSIWSPASISPLSDPLSTSSSCMQRSYPMTYTQASGYSQGYAGSTSYFGGMDCGSYLTPMHHQLSGAGATLSPMGTNAVTSHLNQSPAALSSQAYGASSLGFNSTADCLDYKDQTASWKLNFNADCLDYKDQTSSWKFQVL</sequence>
<feature type="chain" id="PRO_0000259763" description="Homeobox protein OTX2">
    <location>
        <begin position="1"/>
        <end position="289"/>
    </location>
</feature>
<feature type="DNA-binding region" description="Homeobox" evidence="2">
    <location>
        <begin position="38"/>
        <end position="97"/>
    </location>
</feature>
<feature type="region of interest" description="Disordered" evidence="3">
    <location>
        <begin position="93"/>
        <end position="137"/>
    </location>
</feature>
<feature type="compositionally biased region" description="Low complexity" evidence="3">
    <location>
        <begin position="95"/>
        <end position="106"/>
    </location>
</feature>
<feature type="compositionally biased region" description="Polar residues" evidence="3">
    <location>
        <begin position="123"/>
        <end position="137"/>
    </location>
</feature>
<feature type="site" description="Determines DNA-binding specificity" evidence="1">
    <location>
        <position position="87"/>
    </location>
</feature>
<proteinExistence type="evidence at transcript level"/>
<keyword id="KW-0217">Developmental protein</keyword>
<keyword id="KW-0238">DNA-binding</keyword>
<keyword id="KW-0371">Homeobox</keyword>
<keyword id="KW-0539">Nucleus</keyword>
<keyword id="KW-1185">Reference proteome</keyword>
<comment type="function">
    <text evidence="1">May play a central role in the initial events of axis formation and in particular in specifying anterior head regions and their spatial relationship with trunk structures. Activates the head organizer gene cer1 by acting synergistically with siamois and mix-A/mix.1 through the 5'-TAATCT-3' element of the cer1 promoter. Also binds as a complex with lhx1/lim1 and ldb1 to the gsc promoter to stimulate expression (By similarity).</text>
</comment>
<comment type="subcellular location">
    <subcellularLocation>
        <location evidence="2">Nucleus</location>
    </subcellularLocation>
</comment>
<comment type="similarity">
    <text evidence="4">Belongs to the paired homeobox family. Bicoid subfamily.</text>
</comment>
<dbReference type="EMBL" id="CR761863">
    <property type="protein sequence ID" value="CAJ82551.1"/>
    <property type="molecule type" value="mRNA"/>
</dbReference>
<dbReference type="EMBL" id="BC135884">
    <property type="protein sequence ID" value="AAI35885.1"/>
    <property type="molecule type" value="mRNA"/>
</dbReference>
<dbReference type="RefSeq" id="NP_001016177.1">
    <property type="nucleotide sequence ID" value="NM_001016177.2"/>
</dbReference>
<dbReference type="BMRB" id="Q28FN6"/>
<dbReference type="SMR" id="Q28FN6"/>
<dbReference type="FunCoup" id="Q28FN6">
    <property type="interactions" value="198"/>
</dbReference>
<dbReference type="STRING" id="8364.ENSXETP00000006876"/>
<dbReference type="PaxDb" id="8364-ENSXETP00000034219"/>
<dbReference type="DNASU" id="548931"/>
<dbReference type="GeneID" id="548931"/>
<dbReference type="KEGG" id="xtr:548931"/>
<dbReference type="AGR" id="Xenbase:XB-GENE-485220"/>
<dbReference type="CTD" id="5015"/>
<dbReference type="Xenbase" id="XB-GENE-485220">
    <property type="gene designation" value="otx2"/>
</dbReference>
<dbReference type="eggNOG" id="KOG2251">
    <property type="taxonomic scope" value="Eukaryota"/>
</dbReference>
<dbReference type="HOGENOM" id="CLU_064370_0_0_1"/>
<dbReference type="InParanoid" id="Q28FN6"/>
<dbReference type="OrthoDB" id="6159439at2759"/>
<dbReference type="TreeFam" id="TF351179"/>
<dbReference type="Proteomes" id="UP000008143">
    <property type="component" value="Chromosome 8"/>
</dbReference>
<dbReference type="Bgee" id="ENSXETG00000015687">
    <property type="expression patterns" value="Expressed in gastrula and 25 other cell types or tissues"/>
</dbReference>
<dbReference type="GO" id="GO:0005634">
    <property type="term" value="C:nucleus"/>
    <property type="evidence" value="ECO:0007669"/>
    <property type="project" value="UniProtKB-SubCell"/>
</dbReference>
<dbReference type="GO" id="GO:0003677">
    <property type="term" value="F:DNA binding"/>
    <property type="evidence" value="ECO:0007669"/>
    <property type="project" value="UniProtKB-KW"/>
</dbReference>
<dbReference type="GO" id="GO:0000981">
    <property type="term" value="F:DNA-binding transcription factor activity, RNA polymerase II-specific"/>
    <property type="evidence" value="ECO:0007669"/>
    <property type="project" value="InterPro"/>
</dbReference>
<dbReference type="CDD" id="cd00086">
    <property type="entry name" value="homeodomain"/>
    <property type="match status" value="1"/>
</dbReference>
<dbReference type="FunFam" id="1.10.10.60:FF:000142">
    <property type="entry name" value="homeobox protein OTX2 isoform X2"/>
    <property type="match status" value="1"/>
</dbReference>
<dbReference type="Gene3D" id="1.10.10.60">
    <property type="entry name" value="Homeodomain-like"/>
    <property type="match status" value="1"/>
</dbReference>
<dbReference type="InterPro" id="IPR001356">
    <property type="entry name" value="HD"/>
</dbReference>
<dbReference type="InterPro" id="IPR017970">
    <property type="entry name" value="Homeobox_CS"/>
</dbReference>
<dbReference type="InterPro" id="IPR009057">
    <property type="entry name" value="Homeodomain-like_sf"/>
</dbReference>
<dbReference type="InterPro" id="IPR003022">
    <property type="entry name" value="Otx2_TF"/>
</dbReference>
<dbReference type="InterPro" id="IPR003025">
    <property type="entry name" value="Otx_TF"/>
</dbReference>
<dbReference type="InterPro" id="IPR013851">
    <property type="entry name" value="Otx_TF_C"/>
</dbReference>
<dbReference type="PANTHER" id="PTHR45793">
    <property type="entry name" value="HOMEOBOX PROTEIN"/>
    <property type="match status" value="1"/>
</dbReference>
<dbReference type="PANTHER" id="PTHR45793:SF2">
    <property type="entry name" value="HOMEOBOX PROTEIN OTX2"/>
    <property type="match status" value="1"/>
</dbReference>
<dbReference type="Pfam" id="PF00046">
    <property type="entry name" value="Homeodomain"/>
    <property type="match status" value="1"/>
</dbReference>
<dbReference type="Pfam" id="PF03529">
    <property type="entry name" value="TF_Otx"/>
    <property type="match status" value="1"/>
</dbReference>
<dbReference type="PRINTS" id="PR01257">
    <property type="entry name" value="OTX2HOMEOBOX"/>
</dbReference>
<dbReference type="PRINTS" id="PR01255">
    <property type="entry name" value="OTXHOMEOBOX"/>
</dbReference>
<dbReference type="SMART" id="SM00389">
    <property type="entry name" value="HOX"/>
    <property type="match status" value="1"/>
</dbReference>
<dbReference type="SUPFAM" id="SSF46689">
    <property type="entry name" value="Homeodomain-like"/>
    <property type="match status" value="1"/>
</dbReference>
<dbReference type="PROSITE" id="PS00027">
    <property type="entry name" value="HOMEOBOX_1"/>
    <property type="match status" value="1"/>
</dbReference>
<dbReference type="PROSITE" id="PS50071">
    <property type="entry name" value="HOMEOBOX_2"/>
    <property type="match status" value="1"/>
</dbReference>
<evidence type="ECO:0000250" key="1"/>
<evidence type="ECO:0000255" key="2">
    <source>
        <dbReference type="PROSITE-ProRule" id="PRU00108"/>
    </source>
</evidence>
<evidence type="ECO:0000256" key="3">
    <source>
        <dbReference type="SAM" id="MobiDB-lite"/>
    </source>
</evidence>
<evidence type="ECO:0000305" key="4"/>
<protein>
    <recommendedName>
        <fullName>Homeobox protein OTX2</fullName>
    </recommendedName>
    <alternativeName>
        <fullName>Orthodenticle 2</fullName>
    </alternativeName>
</protein>